<keyword id="KW-0413">Isomerase</keyword>
<keyword id="KW-0819">tRNA processing</keyword>
<feature type="chain" id="PRO_1000017101" description="tRNA pseudouridine synthase A">
    <location>
        <begin position="1"/>
        <end position="253"/>
    </location>
</feature>
<feature type="active site" description="Nucleophile" evidence="1">
    <location>
        <position position="53"/>
    </location>
</feature>
<feature type="binding site" evidence="1">
    <location>
        <position position="112"/>
    </location>
    <ligand>
        <name>substrate</name>
    </ligand>
</feature>
<comment type="function">
    <text evidence="1">Formation of pseudouridine at positions 38, 39 and 40 in the anticodon stem and loop of transfer RNAs.</text>
</comment>
<comment type="catalytic activity">
    <reaction evidence="1">
        <text>uridine(38/39/40) in tRNA = pseudouridine(38/39/40) in tRNA</text>
        <dbReference type="Rhea" id="RHEA:22376"/>
        <dbReference type="Rhea" id="RHEA-COMP:10085"/>
        <dbReference type="Rhea" id="RHEA-COMP:10087"/>
        <dbReference type="ChEBI" id="CHEBI:65314"/>
        <dbReference type="ChEBI" id="CHEBI:65315"/>
        <dbReference type="EC" id="5.4.99.12"/>
    </reaction>
</comment>
<comment type="subunit">
    <text evidence="1">Homodimer.</text>
</comment>
<comment type="similarity">
    <text evidence="1">Belongs to the tRNA pseudouridine synthase TruA family.</text>
</comment>
<evidence type="ECO:0000255" key="1">
    <source>
        <dbReference type="HAMAP-Rule" id="MF_00171"/>
    </source>
</evidence>
<gene>
    <name evidence="1" type="primary">truA</name>
    <name type="ordered locus">LACR_0491</name>
</gene>
<sequence length="253" mass="28961">MTRYKATIAYDGTDFAGFQSQTNQRTVQEEIEKVLSKLNSFEPVILQGSGRTDSGVHAFGQVIHFDLNGKARDLERLRFGLDTQTPADIAVKKVELVPDDWHARYQKHEKTYEYYLENSVTRSPFHRHSKAYFRYPLNFELMQGAMAKLVGQHDFTGFTASGSSVDDKVRTIYQAEIIQLDKENFKFIFRGNGFLYKQVRNMVGTVIKIGNDRMPVSQIDKILTSKNRNFAGPTAAPEGLYLKEVKYEPINEI</sequence>
<name>TRUA_LACLS</name>
<dbReference type="EC" id="5.4.99.12" evidence="1"/>
<dbReference type="EMBL" id="CP000425">
    <property type="protein sequence ID" value="ABJ72091.1"/>
    <property type="molecule type" value="Genomic_DNA"/>
</dbReference>
<dbReference type="RefSeq" id="WP_011675511.1">
    <property type="nucleotide sequence ID" value="NC_008527.1"/>
</dbReference>
<dbReference type="SMR" id="Q031N1"/>
<dbReference type="KEGG" id="llc:LACR_0491"/>
<dbReference type="HOGENOM" id="CLU_014673_0_1_9"/>
<dbReference type="Proteomes" id="UP000000240">
    <property type="component" value="Chromosome"/>
</dbReference>
<dbReference type="GO" id="GO:0003723">
    <property type="term" value="F:RNA binding"/>
    <property type="evidence" value="ECO:0007669"/>
    <property type="project" value="InterPro"/>
</dbReference>
<dbReference type="GO" id="GO:0160147">
    <property type="term" value="F:tRNA pseudouridine(38-40) synthase activity"/>
    <property type="evidence" value="ECO:0007669"/>
    <property type="project" value="UniProtKB-EC"/>
</dbReference>
<dbReference type="GO" id="GO:0031119">
    <property type="term" value="P:tRNA pseudouridine synthesis"/>
    <property type="evidence" value="ECO:0007669"/>
    <property type="project" value="UniProtKB-UniRule"/>
</dbReference>
<dbReference type="CDD" id="cd02570">
    <property type="entry name" value="PseudoU_synth_EcTruA"/>
    <property type="match status" value="1"/>
</dbReference>
<dbReference type="FunFam" id="3.30.70.580:FF:000001">
    <property type="entry name" value="tRNA pseudouridine synthase A"/>
    <property type="match status" value="1"/>
</dbReference>
<dbReference type="Gene3D" id="3.30.70.660">
    <property type="entry name" value="Pseudouridine synthase I, catalytic domain, C-terminal subdomain"/>
    <property type="match status" value="1"/>
</dbReference>
<dbReference type="Gene3D" id="3.30.70.580">
    <property type="entry name" value="Pseudouridine synthase I, catalytic domain, N-terminal subdomain"/>
    <property type="match status" value="1"/>
</dbReference>
<dbReference type="HAMAP" id="MF_00171">
    <property type="entry name" value="TruA"/>
    <property type="match status" value="1"/>
</dbReference>
<dbReference type="InterPro" id="IPR020103">
    <property type="entry name" value="PsdUridine_synth_cat_dom_sf"/>
</dbReference>
<dbReference type="InterPro" id="IPR001406">
    <property type="entry name" value="PsdUridine_synth_TruA"/>
</dbReference>
<dbReference type="InterPro" id="IPR020097">
    <property type="entry name" value="PsdUridine_synth_TruA_a/b_dom"/>
</dbReference>
<dbReference type="InterPro" id="IPR020095">
    <property type="entry name" value="PsdUridine_synth_TruA_C"/>
</dbReference>
<dbReference type="InterPro" id="IPR020094">
    <property type="entry name" value="TruA/RsuA/RluB/E/F_N"/>
</dbReference>
<dbReference type="NCBIfam" id="TIGR00071">
    <property type="entry name" value="hisT_truA"/>
    <property type="match status" value="1"/>
</dbReference>
<dbReference type="PANTHER" id="PTHR11142">
    <property type="entry name" value="PSEUDOURIDYLATE SYNTHASE"/>
    <property type="match status" value="1"/>
</dbReference>
<dbReference type="PANTHER" id="PTHR11142:SF0">
    <property type="entry name" value="TRNA PSEUDOURIDINE SYNTHASE-LIKE 1"/>
    <property type="match status" value="1"/>
</dbReference>
<dbReference type="Pfam" id="PF01416">
    <property type="entry name" value="PseudoU_synth_1"/>
    <property type="match status" value="2"/>
</dbReference>
<dbReference type="PIRSF" id="PIRSF001430">
    <property type="entry name" value="tRNA_psdUrid_synth"/>
    <property type="match status" value="1"/>
</dbReference>
<dbReference type="SUPFAM" id="SSF55120">
    <property type="entry name" value="Pseudouridine synthase"/>
    <property type="match status" value="1"/>
</dbReference>
<reference key="1">
    <citation type="journal article" date="2006" name="Proc. Natl. Acad. Sci. U.S.A.">
        <title>Comparative genomics of the lactic acid bacteria.</title>
        <authorList>
            <person name="Makarova K.S."/>
            <person name="Slesarev A."/>
            <person name="Wolf Y.I."/>
            <person name="Sorokin A."/>
            <person name="Mirkin B."/>
            <person name="Koonin E.V."/>
            <person name="Pavlov A."/>
            <person name="Pavlova N."/>
            <person name="Karamychev V."/>
            <person name="Polouchine N."/>
            <person name="Shakhova V."/>
            <person name="Grigoriev I."/>
            <person name="Lou Y."/>
            <person name="Rohksar D."/>
            <person name="Lucas S."/>
            <person name="Huang K."/>
            <person name="Goodstein D.M."/>
            <person name="Hawkins T."/>
            <person name="Plengvidhya V."/>
            <person name="Welker D."/>
            <person name="Hughes J."/>
            <person name="Goh Y."/>
            <person name="Benson A."/>
            <person name="Baldwin K."/>
            <person name="Lee J.-H."/>
            <person name="Diaz-Muniz I."/>
            <person name="Dosti B."/>
            <person name="Smeianov V."/>
            <person name="Wechter W."/>
            <person name="Barabote R."/>
            <person name="Lorca G."/>
            <person name="Altermann E."/>
            <person name="Barrangou R."/>
            <person name="Ganesan B."/>
            <person name="Xie Y."/>
            <person name="Rawsthorne H."/>
            <person name="Tamir D."/>
            <person name="Parker C."/>
            <person name="Breidt F."/>
            <person name="Broadbent J.R."/>
            <person name="Hutkins R."/>
            <person name="O'Sullivan D."/>
            <person name="Steele J."/>
            <person name="Unlu G."/>
            <person name="Saier M.H. Jr."/>
            <person name="Klaenhammer T."/>
            <person name="Richardson P."/>
            <person name="Kozyavkin S."/>
            <person name="Weimer B.C."/>
            <person name="Mills D.A."/>
        </authorList>
    </citation>
    <scope>NUCLEOTIDE SEQUENCE [LARGE SCALE GENOMIC DNA]</scope>
    <source>
        <strain>SK11</strain>
    </source>
</reference>
<accession>Q031N1</accession>
<proteinExistence type="inferred from homology"/>
<protein>
    <recommendedName>
        <fullName evidence="1">tRNA pseudouridine synthase A</fullName>
        <ecNumber evidence="1">5.4.99.12</ecNumber>
    </recommendedName>
    <alternativeName>
        <fullName evidence="1">tRNA pseudouridine(38-40) synthase</fullName>
    </alternativeName>
    <alternativeName>
        <fullName evidence="1">tRNA pseudouridylate synthase I</fullName>
    </alternativeName>
    <alternativeName>
        <fullName evidence="1">tRNA-uridine isomerase I</fullName>
    </alternativeName>
</protein>
<organism>
    <name type="scientific">Lactococcus lactis subsp. cremoris (strain SK11)</name>
    <dbReference type="NCBI Taxonomy" id="272622"/>
    <lineage>
        <taxon>Bacteria</taxon>
        <taxon>Bacillati</taxon>
        <taxon>Bacillota</taxon>
        <taxon>Bacilli</taxon>
        <taxon>Lactobacillales</taxon>
        <taxon>Streptococcaceae</taxon>
        <taxon>Lactococcus</taxon>
        <taxon>Lactococcus cremoris subsp. cremoris</taxon>
    </lineage>
</organism>